<proteinExistence type="inferred from homology"/>
<organism>
    <name type="scientific">African swine fever virus (isolate Warthog/Namibia/Wart80/1980)</name>
    <name type="common">ASFV</name>
    <dbReference type="NCBI Taxonomy" id="561444"/>
    <lineage>
        <taxon>Viruses</taxon>
        <taxon>Varidnaviria</taxon>
        <taxon>Bamfordvirae</taxon>
        <taxon>Nucleocytoviricota</taxon>
        <taxon>Pokkesviricetes</taxon>
        <taxon>Asfuvirales</taxon>
        <taxon>Asfarviridae</taxon>
        <taxon>Asfivirus</taxon>
        <taxon>African swine fever virus</taxon>
    </lineage>
</organism>
<gene>
    <name type="ordered locus">War-148</name>
</gene>
<keyword id="KW-0325">Glycoprotein</keyword>
<keyword id="KW-0945">Host-virus interaction</keyword>
<keyword id="KW-1100">Inhibition of host NF-kappa-B by virus</keyword>
<keyword id="KW-0732">Signal</keyword>
<sequence>MKMETFLVCLFHNADGLHQQIQEILYLLRMHIYETNLYLKQELSRLIYPNRQLSFVLLMPLSLLRNWDDIEYLTDVVDDKQTLHYAANLLTNYVLHLSMFQKLTKPYFLLAVKRVSEKLNKKQQHSFYEVLVTSETLNNYENLSKNILNTLMFAVRYVFKPTPNYSEILAELEKKNKIHHIIFNMVITDFAQIREQQMDKHLCETNNKLRQECKETIFDLKVVGNV</sequence>
<reference key="1">
    <citation type="submission" date="2003-03" db="EMBL/GenBank/DDBJ databases">
        <title>African swine fever virus genomes.</title>
        <authorList>
            <person name="Kutish G.F."/>
            <person name="Rock D.L."/>
        </authorList>
    </citation>
    <scope>NUCLEOTIDE SEQUENCE [LARGE SCALE GENOMIC DNA]</scope>
</reference>
<comment type="function">
    <text evidence="1">Plays a role in the inhibition of host NF-kappa-B and IRF3 signaling pathways. Mechanistically, promotes the degradation of host IKBKG through enhancing its ubiquitination leading to inhibition of both pathways.</text>
</comment>
<comment type="induction">
    <text evidence="2">Expressed in the intermediate phase of the viral replicative cycle (immediately after DNA replication).</text>
</comment>
<comment type="similarity">
    <text evidence="4">Belongs to the asfivirus I226R family.</text>
</comment>
<feature type="signal peptide" evidence="3">
    <location>
        <begin position="1"/>
        <end position="16"/>
    </location>
</feature>
<feature type="chain" id="PRO_0000373594" description="Late protein I226R">
    <location>
        <begin position="17"/>
        <end position="226"/>
    </location>
</feature>
<feature type="glycosylation site" description="N-linked (GlcNAc...) asparagine; by host" evidence="3">
    <location>
        <position position="142"/>
    </location>
</feature>
<feature type="glycosylation site" description="N-linked (GlcNAc...) asparagine; by host" evidence="3">
    <location>
        <position position="164"/>
    </location>
</feature>
<protein>
    <recommendedName>
        <fullName>Late protein I226R</fullName>
        <shortName>pI226R</shortName>
    </recommendedName>
</protein>
<organismHost>
    <name type="scientific">Ornithodoros</name>
    <name type="common">relapsing fever ticks</name>
    <dbReference type="NCBI Taxonomy" id="6937"/>
</organismHost>
<organismHost>
    <name type="scientific">Phacochoerus aethiopicus</name>
    <name type="common">Warthog</name>
    <dbReference type="NCBI Taxonomy" id="85517"/>
</organismHost>
<organismHost>
    <name type="scientific">Phacochoerus africanus</name>
    <name type="common">Warthog</name>
    <dbReference type="NCBI Taxonomy" id="41426"/>
</organismHost>
<organismHost>
    <name type="scientific">Potamochoerus larvatus</name>
    <name type="common">Bushpig</name>
    <dbReference type="NCBI Taxonomy" id="273792"/>
</organismHost>
<organismHost>
    <name type="scientific">Sus scrofa</name>
    <name type="common">Pig</name>
    <dbReference type="NCBI Taxonomy" id="9823"/>
</organismHost>
<evidence type="ECO:0000250" key="1">
    <source>
        <dbReference type="UniProtKB" id="P27944"/>
    </source>
</evidence>
<evidence type="ECO:0000250" key="2">
    <source>
        <dbReference type="UniProtKB" id="Q65250"/>
    </source>
</evidence>
<evidence type="ECO:0000255" key="3"/>
<evidence type="ECO:0000305" key="4"/>
<accession>P0CAA3</accession>
<dbReference type="EMBL" id="AY261366">
    <property type="status" value="NOT_ANNOTATED_CDS"/>
    <property type="molecule type" value="Genomic_DNA"/>
</dbReference>
<dbReference type="SMR" id="P0CAA3"/>
<dbReference type="Proteomes" id="UP000000858">
    <property type="component" value="Segment"/>
</dbReference>
<dbReference type="GO" id="GO:0085034">
    <property type="term" value="P:symbiont-mediated suppression of host NF-kappaB cascade"/>
    <property type="evidence" value="ECO:0007669"/>
    <property type="project" value="UniProtKB-KW"/>
</dbReference>
<name>VF226_ASFWA</name>